<name>RUVC_SALTY</name>
<organism>
    <name type="scientific">Salmonella typhimurium (strain LT2 / SGSC1412 / ATCC 700720)</name>
    <dbReference type="NCBI Taxonomy" id="99287"/>
    <lineage>
        <taxon>Bacteria</taxon>
        <taxon>Pseudomonadati</taxon>
        <taxon>Pseudomonadota</taxon>
        <taxon>Gammaproteobacteria</taxon>
        <taxon>Enterobacterales</taxon>
        <taxon>Enterobacteriaceae</taxon>
        <taxon>Salmonella</taxon>
    </lineage>
</organism>
<comment type="function">
    <text evidence="1">The RuvA-RuvB-RuvC complex processes Holliday junction (HJ) DNA during genetic recombination and DNA repair. Endonuclease that resolves HJ intermediates. Cleaves cruciform DNA by making single-stranded nicks across the HJ at symmetrical positions within the homologous arms, yielding a 5'-phosphate and a 3'-hydroxyl group; requires a central core of homology in the junction. The consensus cleavage sequence is 5'-(A/T)TT(C/G)-3'. Cleavage occurs on the 3'-side of the TT dinucleotide at the point of strand exchange. HJ branch migration catalyzed by RuvA-RuvB allows RuvC to scan DNA until it finds its consensus sequence, where it cleaves and resolves the cruciform DNA.</text>
</comment>
<comment type="catalytic activity">
    <reaction evidence="1">
        <text>Endonucleolytic cleavage at a junction such as a reciprocal single-stranded crossover between two homologous DNA duplexes (Holliday junction).</text>
        <dbReference type="EC" id="3.1.21.10"/>
    </reaction>
</comment>
<comment type="cofactor">
    <cofactor evidence="1">
        <name>Mg(2+)</name>
        <dbReference type="ChEBI" id="CHEBI:18420"/>
    </cofactor>
    <text evidence="1">Binds 2 Mg(2+) ion per subunit.</text>
</comment>
<comment type="subunit">
    <text evidence="1">Homodimer which binds Holliday junction (HJ) DNA. The HJ becomes 2-fold symmetrical on binding to RuvC with unstacked arms; it has a different conformation from HJ DNA in complex with RuvA. In the full resolvosome a probable DNA-RuvA(4)-RuvB(12)-RuvC(2) complex forms which resolves the HJ.</text>
</comment>
<comment type="subcellular location">
    <subcellularLocation>
        <location evidence="1">Cytoplasm</location>
    </subcellularLocation>
</comment>
<comment type="similarity">
    <text evidence="1">Belongs to the RuvC family.</text>
</comment>
<keyword id="KW-0963">Cytoplasm</keyword>
<keyword id="KW-0227">DNA damage</keyword>
<keyword id="KW-0233">DNA recombination</keyword>
<keyword id="KW-0234">DNA repair</keyword>
<keyword id="KW-0238">DNA-binding</keyword>
<keyword id="KW-0255">Endonuclease</keyword>
<keyword id="KW-0378">Hydrolase</keyword>
<keyword id="KW-0460">Magnesium</keyword>
<keyword id="KW-0479">Metal-binding</keyword>
<keyword id="KW-0540">Nuclease</keyword>
<keyword id="KW-1185">Reference proteome</keyword>
<reference key="1">
    <citation type="journal article" date="2001" name="Nature">
        <title>Complete genome sequence of Salmonella enterica serovar Typhimurium LT2.</title>
        <authorList>
            <person name="McClelland M."/>
            <person name="Sanderson K.E."/>
            <person name="Spieth J."/>
            <person name="Clifton S.W."/>
            <person name="Latreille P."/>
            <person name="Courtney L."/>
            <person name="Porwollik S."/>
            <person name="Ali J."/>
            <person name="Dante M."/>
            <person name="Du F."/>
            <person name="Hou S."/>
            <person name="Layman D."/>
            <person name="Leonard S."/>
            <person name="Nguyen C."/>
            <person name="Scott K."/>
            <person name="Holmes A."/>
            <person name="Grewal N."/>
            <person name="Mulvaney E."/>
            <person name="Ryan E."/>
            <person name="Sun H."/>
            <person name="Florea L."/>
            <person name="Miller W."/>
            <person name="Stoneking T."/>
            <person name="Nhan M."/>
            <person name="Waterston R."/>
            <person name="Wilson R.K."/>
        </authorList>
    </citation>
    <scope>NUCLEOTIDE SEQUENCE [LARGE SCALE GENOMIC DNA]</scope>
    <source>
        <strain>LT2 / SGSC1412 / ATCC 700720</strain>
    </source>
</reference>
<proteinExistence type="inferred from homology"/>
<accession>P66762</accession>
<accession>Q8XGF7</accession>
<dbReference type="EC" id="3.1.21.10" evidence="1"/>
<dbReference type="EMBL" id="AE006468">
    <property type="protein sequence ID" value="AAL20814.1"/>
    <property type="molecule type" value="Genomic_DNA"/>
</dbReference>
<dbReference type="RefSeq" id="NP_460855.1">
    <property type="nucleotide sequence ID" value="NC_003197.2"/>
</dbReference>
<dbReference type="RefSeq" id="WP_000022509.1">
    <property type="nucleotide sequence ID" value="NC_003197.2"/>
</dbReference>
<dbReference type="SMR" id="P66762"/>
<dbReference type="STRING" id="99287.STM1898"/>
<dbReference type="PaxDb" id="99287-STM1898"/>
<dbReference type="GeneID" id="1253419"/>
<dbReference type="GeneID" id="93033412"/>
<dbReference type="KEGG" id="stm:STM1898"/>
<dbReference type="PATRIC" id="fig|99287.12.peg.2013"/>
<dbReference type="HOGENOM" id="CLU_091257_2_1_6"/>
<dbReference type="OMA" id="AICHIWR"/>
<dbReference type="PhylomeDB" id="P66762"/>
<dbReference type="BioCyc" id="SENT99287:STM1898-MONOMER"/>
<dbReference type="Proteomes" id="UP000001014">
    <property type="component" value="Chromosome"/>
</dbReference>
<dbReference type="GO" id="GO:0005737">
    <property type="term" value="C:cytoplasm"/>
    <property type="evidence" value="ECO:0007669"/>
    <property type="project" value="UniProtKB-SubCell"/>
</dbReference>
<dbReference type="GO" id="GO:0048476">
    <property type="term" value="C:Holliday junction resolvase complex"/>
    <property type="evidence" value="ECO:0007669"/>
    <property type="project" value="UniProtKB-UniRule"/>
</dbReference>
<dbReference type="GO" id="GO:0008821">
    <property type="term" value="F:crossover junction DNA endonuclease activity"/>
    <property type="evidence" value="ECO:0007669"/>
    <property type="project" value="UniProtKB-UniRule"/>
</dbReference>
<dbReference type="GO" id="GO:0003677">
    <property type="term" value="F:DNA binding"/>
    <property type="evidence" value="ECO:0007669"/>
    <property type="project" value="UniProtKB-KW"/>
</dbReference>
<dbReference type="GO" id="GO:0000287">
    <property type="term" value="F:magnesium ion binding"/>
    <property type="evidence" value="ECO:0007669"/>
    <property type="project" value="UniProtKB-UniRule"/>
</dbReference>
<dbReference type="GO" id="GO:0006310">
    <property type="term" value="P:DNA recombination"/>
    <property type="evidence" value="ECO:0007669"/>
    <property type="project" value="UniProtKB-UniRule"/>
</dbReference>
<dbReference type="GO" id="GO:0006281">
    <property type="term" value="P:DNA repair"/>
    <property type="evidence" value="ECO:0007669"/>
    <property type="project" value="UniProtKB-UniRule"/>
</dbReference>
<dbReference type="CDD" id="cd16962">
    <property type="entry name" value="RuvC"/>
    <property type="match status" value="1"/>
</dbReference>
<dbReference type="FunFam" id="3.30.420.10:FF:000002">
    <property type="entry name" value="Crossover junction endodeoxyribonuclease RuvC"/>
    <property type="match status" value="1"/>
</dbReference>
<dbReference type="Gene3D" id="3.30.420.10">
    <property type="entry name" value="Ribonuclease H-like superfamily/Ribonuclease H"/>
    <property type="match status" value="1"/>
</dbReference>
<dbReference type="HAMAP" id="MF_00034">
    <property type="entry name" value="RuvC"/>
    <property type="match status" value="1"/>
</dbReference>
<dbReference type="InterPro" id="IPR012337">
    <property type="entry name" value="RNaseH-like_sf"/>
</dbReference>
<dbReference type="InterPro" id="IPR036397">
    <property type="entry name" value="RNaseH_sf"/>
</dbReference>
<dbReference type="InterPro" id="IPR020563">
    <property type="entry name" value="X-over_junc_endoDNase_Mg_BS"/>
</dbReference>
<dbReference type="InterPro" id="IPR002176">
    <property type="entry name" value="X-over_junc_endoDNase_RuvC"/>
</dbReference>
<dbReference type="NCBIfam" id="NF000711">
    <property type="entry name" value="PRK00039.2-1"/>
    <property type="match status" value="1"/>
</dbReference>
<dbReference type="NCBIfam" id="TIGR00228">
    <property type="entry name" value="ruvC"/>
    <property type="match status" value="1"/>
</dbReference>
<dbReference type="PANTHER" id="PTHR30194">
    <property type="entry name" value="CROSSOVER JUNCTION ENDODEOXYRIBONUCLEASE RUVC"/>
    <property type="match status" value="1"/>
</dbReference>
<dbReference type="PANTHER" id="PTHR30194:SF3">
    <property type="entry name" value="CROSSOVER JUNCTION ENDODEOXYRIBONUCLEASE RUVC"/>
    <property type="match status" value="1"/>
</dbReference>
<dbReference type="Pfam" id="PF02075">
    <property type="entry name" value="RuvC"/>
    <property type="match status" value="1"/>
</dbReference>
<dbReference type="PRINTS" id="PR00696">
    <property type="entry name" value="RSOLVASERUVC"/>
</dbReference>
<dbReference type="SUPFAM" id="SSF53098">
    <property type="entry name" value="Ribonuclease H-like"/>
    <property type="match status" value="1"/>
</dbReference>
<dbReference type="PROSITE" id="PS01321">
    <property type="entry name" value="RUVC"/>
    <property type="match status" value="1"/>
</dbReference>
<feature type="chain" id="PRO_0000183131" description="Crossover junction endodeoxyribonuclease RuvC">
    <location>
        <begin position="1"/>
        <end position="173"/>
    </location>
</feature>
<feature type="active site" evidence="1">
    <location>
        <position position="8"/>
    </location>
</feature>
<feature type="active site" evidence="1">
    <location>
        <position position="67"/>
    </location>
</feature>
<feature type="active site" evidence="1">
    <location>
        <position position="139"/>
    </location>
</feature>
<feature type="binding site" evidence="1">
    <location>
        <position position="8"/>
    </location>
    <ligand>
        <name>Mg(2+)</name>
        <dbReference type="ChEBI" id="CHEBI:18420"/>
        <label>1</label>
    </ligand>
</feature>
<feature type="binding site" evidence="1">
    <location>
        <position position="67"/>
    </location>
    <ligand>
        <name>Mg(2+)</name>
        <dbReference type="ChEBI" id="CHEBI:18420"/>
        <label>2</label>
    </ligand>
</feature>
<feature type="binding site" evidence="1">
    <location>
        <position position="139"/>
    </location>
    <ligand>
        <name>Mg(2+)</name>
        <dbReference type="ChEBI" id="CHEBI:18420"/>
        <label>1</label>
    </ligand>
</feature>
<protein>
    <recommendedName>
        <fullName evidence="1">Crossover junction endodeoxyribonuclease RuvC</fullName>
        <ecNumber evidence="1">3.1.21.10</ecNumber>
    </recommendedName>
    <alternativeName>
        <fullName evidence="1">Holliday junction nuclease RuvC</fullName>
    </alternativeName>
    <alternativeName>
        <fullName evidence="1">Holliday junction resolvase RuvC</fullName>
    </alternativeName>
</protein>
<sequence>MSIILGIDPGSRITGYGVIRQVGRQLTYLGSGCIRTKVDDLPSRLKLIYAGVTEIITQFQPDYFAIEQVFMAKNADSALKLGQARGVAIVAAVNQELPVFEYAARQVKQTVVGIGSAEKSQVQHMVRTLLKLPANPQADAADALAIAITHCHVSQNAMQMSESRLNLARGRLR</sequence>
<gene>
    <name evidence="1" type="primary">ruvC</name>
    <name type="ordered locus">STM1898</name>
</gene>
<evidence type="ECO:0000255" key="1">
    <source>
        <dbReference type="HAMAP-Rule" id="MF_00034"/>
    </source>
</evidence>